<comment type="function">
    <text evidence="2 4">Together with the serine/threonine kinase Pkn1, may play a role in the specific interactions with host proteins during intracellular growth (Probable). Autophosphorylates and also phosphorylates Pkn1 (PubMed:14500499).</text>
</comment>
<comment type="catalytic activity">
    <reaction evidence="1 2">
        <text>L-seryl-[protein] + ATP = O-phospho-L-seryl-[protein] + ADP + H(+)</text>
        <dbReference type="Rhea" id="RHEA:17989"/>
        <dbReference type="Rhea" id="RHEA-COMP:9863"/>
        <dbReference type="Rhea" id="RHEA-COMP:11604"/>
        <dbReference type="ChEBI" id="CHEBI:15378"/>
        <dbReference type="ChEBI" id="CHEBI:29999"/>
        <dbReference type="ChEBI" id="CHEBI:30616"/>
        <dbReference type="ChEBI" id="CHEBI:83421"/>
        <dbReference type="ChEBI" id="CHEBI:456216"/>
        <dbReference type="EC" id="2.7.11.1"/>
    </reaction>
</comment>
<comment type="catalytic activity">
    <reaction evidence="1 2">
        <text>L-threonyl-[protein] + ATP = O-phospho-L-threonyl-[protein] + ADP + H(+)</text>
        <dbReference type="Rhea" id="RHEA:46608"/>
        <dbReference type="Rhea" id="RHEA-COMP:11060"/>
        <dbReference type="Rhea" id="RHEA-COMP:11605"/>
        <dbReference type="ChEBI" id="CHEBI:15378"/>
        <dbReference type="ChEBI" id="CHEBI:30013"/>
        <dbReference type="ChEBI" id="CHEBI:30616"/>
        <dbReference type="ChEBI" id="CHEBI:61977"/>
        <dbReference type="ChEBI" id="CHEBI:456216"/>
        <dbReference type="EC" id="2.7.11.1"/>
    </reaction>
</comment>
<comment type="subunit">
    <text evidence="2">Interacts with Pkn1.</text>
</comment>
<comment type="developmental stage">
    <text evidence="2">Detected in isolated elementary bodies 40 hours post-infection (at protein level).</text>
</comment>
<comment type="induction">
    <text evidence="2">Transcribed after 6 hours in infected mouse fibroblast cells, that is from the mid-phase of the developmental cycle.</text>
</comment>
<comment type="PTM">
    <text evidence="1 2">Autophosphorylated on serine and threonine residues (By similarity) (PubMed:14500499). Present in elementary bodies 40 hours post-infection as 2 bands of approximately 55 to 60 and 45 to 50 kDa, which may be due to differential phosphorylation as well as degradation; an enzymatically active full-length protein can also be detected (PubMed:14500499).</text>
</comment>
<comment type="similarity">
    <text evidence="1">Belongs to the protein kinase superfamily. Ser/Thr protein kinase family.</text>
</comment>
<dbReference type="EC" id="2.7.11.1" evidence="1 2"/>
<dbReference type="EMBL" id="AY148436">
    <property type="protein sequence ID" value="AAN71626.1"/>
    <property type="molecule type" value="Genomic_DNA"/>
</dbReference>
<dbReference type="EMBL" id="AM884176">
    <property type="protein sequence ID" value="CAP03993.1"/>
    <property type="molecule type" value="Genomic_DNA"/>
</dbReference>
<dbReference type="RefSeq" id="WP_009873709.1">
    <property type="nucleotide sequence ID" value="NC_010287.1"/>
</dbReference>
<dbReference type="RefSeq" id="YP_001654629.1">
    <property type="nucleotide sequence ID" value="NC_010287.1"/>
</dbReference>
<dbReference type="SMR" id="P0DPS9"/>
<dbReference type="KEGG" id="ctb:CTL0553"/>
<dbReference type="Proteomes" id="UP001154402">
    <property type="component" value="Chromosome"/>
</dbReference>
<dbReference type="GO" id="GO:0005524">
    <property type="term" value="F:ATP binding"/>
    <property type="evidence" value="ECO:0007669"/>
    <property type="project" value="UniProtKB-KW"/>
</dbReference>
<dbReference type="GO" id="GO:0106310">
    <property type="term" value="F:protein serine kinase activity"/>
    <property type="evidence" value="ECO:0007669"/>
    <property type="project" value="RHEA"/>
</dbReference>
<dbReference type="GO" id="GO:0004674">
    <property type="term" value="F:protein serine/threonine kinase activity"/>
    <property type="evidence" value="ECO:0007669"/>
    <property type="project" value="UniProtKB-UniRule"/>
</dbReference>
<dbReference type="CDD" id="cd14014">
    <property type="entry name" value="STKc_PknB_like"/>
    <property type="match status" value="1"/>
</dbReference>
<dbReference type="Gene3D" id="3.30.200.20">
    <property type="entry name" value="Phosphorylase Kinase, domain 1"/>
    <property type="match status" value="1"/>
</dbReference>
<dbReference type="Gene3D" id="1.25.40.10">
    <property type="entry name" value="Tetratricopeptide repeat domain"/>
    <property type="match status" value="1"/>
</dbReference>
<dbReference type="Gene3D" id="1.10.510.10">
    <property type="entry name" value="Transferase(Phosphotransferase) domain 1"/>
    <property type="match status" value="1"/>
</dbReference>
<dbReference type="HAMAP" id="MF_01957">
    <property type="entry name" value="PknD_kinase"/>
    <property type="match status" value="1"/>
</dbReference>
<dbReference type="InterPro" id="IPR011009">
    <property type="entry name" value="Kinase-like_dom_sf"/>
</dbReference>
<dbReference type="InterPro" id="IPR000719">
    <property type="entry name" value="Prot_kinase_dom"/>
</dbReference>
<dbReference type="InterPro" id="IPR017441">
    <property type="entry name" value="Protein_kinase_ATP_BS"/>
</dbReference>
<dbReference type="InterPro" id="IPR008271">
    <property type="entry name" value="Ser/Thr_kinase_AS"/>
</dbReference>
<dbReference type="InterPro" id="IPR023507">
    <property type="entry name" value="Ser/Thr_kinase_PknD"/>
</dbReference>
<dbReference type="InterPro" id="IPR011990">
    <property type="entry name" value="TPR-like_helical_dom_sf"/>
</dbReference>
<dbReference type="NCBIfam" id="NF009651">
    <property type="entry name" value="PRK13184.1"/>
    <property type="match status" value="1"/>
</dbReference>
<dbReference type="PANTHER" id="PTHR43289">
    <property type="entry name" value="MITOGEN-ACTIVATED PROTEIN KINASE KINASE KINASE 20-RELATED"/>
    <property type="match status" value="1"/>
</dbReference>
<dbReference type="PANTHER" id="PTHR43289:SF34">
    <property type="entry name" value="SERINE_THREONINE-PROTEIN KINASE YBDM-RELATED"/>
    <property type="match status" value="1"/>
</dbReference>
<dbReference type="Pfam" id="PF00069">
    <property type="entry name" value="Pkinase"/>
    <property type="match status" value="1"/>
</dbReference>
<dbReference type="SMART" id="SM00220">
    <property type="entry name" value="S_TKc"/>
    <property type="match status" value="1"/>
</dbReference>
<dbReference type="SUPFAM" id="SSF56112">
    <property type="entry name" value="Protein kinase-like (PK-like)"/>
    <property type="match status" value="1"/>
</dbReference>
<dbReference type="PROSITE" id="PS00107">
    <property type="entry name" value="PROTEIN_KINASE_ATP"/>
    <property type="match status" value="1"/>
</dbReference>
<dbReference type="PROSITE" id="PS50011">
    <property type="entry name" value="PROTEIN_KINASE_DOM"/>
    <property type="match status" value="1"/>
</dbReference>
<dbReference type="PROSITE" id="PS00108">
    <property type="entry name" value="PROTEIN_KINASE_ST"/>
    <property type="match status" value="1"/>
</dbReference>
<reference key="1">
    <citation type="journal article" date="2003" name="Infect. Immun.">
        <title>Identification of two eukaryote-like serine/threonine kinases encoded by Chlamydia trachomatis serovar L2 and characterization of interacting partners of Pkn1.</title>
        <authorList>
            <person name="Verma A."/>
            <person name="Maurelli A.T."/>
        </authorList>
    </citation>
    <scope>NUCLEOTIDE SEQUENCE [GENOMIC DNA]</scope>
    <scope>FUNCTION AS A KINASE</scope>
    <scope>CATALYTIC ACTIVITY</scope>
    <scope>INTERACTION WITH PKN1</scope>
    <scope>DEVELOPMENTAL STAGE</scope>
    <scope>INDUCTION</scope>
    <scope>AUTOPHOSPHORYLATION</scope>
    <source>
        <strain>L2</strain>
    </source>
</reference>
<reference key="2">
    <citation type="journal article" date="2008" name="Genome Res.">
        <title>Chlamydia trachomatis: genome sequence analysis of lymphogranuloma venereum isolates.</title>
        <authorList>
            <person name="Thomson N.R."/>
            <person name="Holden M.T.G."/>
            <person name="Carder C."/>
            <person name="Lennard N."/>
            <person name="Lockey S.J."/>
            <person name="Marsh P."/>
            <person name="Skipp P."/>
            <person name="O'Connor C.D."/>
            <person name="Goodhead I."/>
            <person name="Norbertzcak H."/>
            <person name="Harris B."/>
            <person name="Ormond D."/>
            <person name="Rance R."/>
            <person name="Quail M.A."/>
            <person name="Parkhill J."/>
            <person name="Stephens R.S."/>
            <person name="Clarke I.N."/>
        </authorList>
    </citation>
    <scope>NUCLEOTIDE SEQUENCE [LARGE SCALE GENOMIC DNA]</scope>
    <source>
        <strain>ATCC VR-902B / DSM 19102 / 434/Bu</strain>
    </source>
</reference>
<protein>
    <recommendedName>
        <fullName evidence="1">Serine/threonine-protein kinase PknD</fullName>
        <ecNumber evidence="1 2">2.7.11.1</ecNumber>
    </recommendedName>
</protein>
<keyword id="KW-0067">ATP-binding</keyword>
<keyword id="KW-0418">Kinase</keyword>
<keyword id="KW-0547">Nucleotide-binding</keyword>
<keyword id="KW-0597">Phosphoprotein</keyword>
<keyword id="KW-0723">Serine/threonine-protein kinase</keyword>
<keyword id="KW-0808">Transferase</keyword>
<proteinExistence type="evidence at protein level"/>
<accession>P0DPS9</accession>
<accession>B0B7L7</accession>
<accession>O84303</accession>
<accession>Q8GDH7</accession>
<sequence length="934" mass="107754">MQRYELIRLIGKGGMGEVYLAHDKACSRRVALKRIREDLSGNALLRKRFLREAKIAADLIHPGIVPVYSICSDGEAVYYTMPYIEGFSLKSLLKSVWQKEVLSKELEEKTSVKSFLPIFDKICATVEYIHSKGVLHRDLKPDNILLGLFGEVVIVDWGAAIFKHAKELKLEQDDEAAVSFDERNICYSSMTIPGKIVGTPDYMAPESLLGVEASEKTDIYALGLILYQMLTLAFPYRRKKGRKLSYRDVVLPPIEMSPYREIPPSLSQIAMKAIAINPADRFSSIQELRQALQPYLQGDPEWTVKATLMAKEKSCWKYYDPILLSRYFPVLASSPAQWYNFMLSEVEISASTRVEYTVTKSAVHEGMGILFLPSKEAERGEFYCGYGLWFSVQNHELTVSLIKNGIEIQKKSQEMISQQYRFAILIEKSDNRIAVFVEQALFILHIDYLPSLGNRLGVIIQDLQGMSNIAISESIGALRVSCLAVPDAFLSEKLYDQAAIFYRKIRDSFPGRKESYEAQFRLGVTLLTQIEEQGGDLTQALSSFDYLHGGAGAPLEYLGKALVYQRNGSFVEEIRCLLFALKRYSQHPEIPRLEDHLCFRLYDSLHKHRSEALVFMLLILWIAPEKISVREEKRFLRIIYHKQQATLFCQVDKAPLQFRSSKMELFLSFWTGFSLFLPELFRRAGELRDYQALADIFYVAGVSGNREAFMQFSTALANVSDEITFPESLHNQKVAELMFFVKGVEALRNKDYQKAKKLLWKTPFTLQLYALDIFHIQAFLDEEIESFIDLLQAIYDPASEEERDHILVYIIQTHLWNRDLERAYKLLNDRFPLDEELAEYSEAFILWGCYLALTGDRVAVKAHFSRCRYKYGKSALIGKCVDGDIFDYLDNLVWWEKKMTLFQSYFLLRCLNESPRRYEKYRQAYLSMENNFFD</sequence>
<feature type="chain" id="PRO_1000188972" description="Serine/threonine-protein kinase PknD">
    <location>
        <begin position="1"/>
        <end position="934"/>
    </location>
</feature>
<feature type="domain" description="Protein kinase" evidence="1">
    <location>
        <begin position="4"/>
        <end position="296"/>
    </location>
</feature>
<feature type="active site" description="Proton acceptor" evidence="1">
    <location>
        <position position="138"/>
    </location>
</feature>
<feature type="binding site" evidence="1">
    <location>
        <begin position="10"/>
        <end position="18"/>
    </location>
    <ligand>
        <name>ATP</name>
        <dbReference type="ChEBI" id="CHEBI:30616"/>
    </ligand>
</feature>
<feature type="binding site" evidence="1">
    <location>
        <position position="33"/>
    </location>
    <ligand>
        <name>ATP</name>
        <dbReference type="ChEBI" id="CHEBI:30616"/>
    </ligand>
</feature>
<feature type="sequence conflict" description="In Ref. 1; AAN71626." evidence="3" ref="1">
    <original>K</original>
    <variation>Q</variation>
    <location>
        <position position="47"/>
    </location>
</feature>
<feature type="sequence conflict" description="In Ref. 1; AAN71626." evidence="3" ref="1">
    <original>V</original>
    <variation>I</variation>
    <location>
        <position position="155"/>
    </location>
</feature>
<feature type="sequence conflict" description="In Ref. 1; AAN71626." evidence="3" ref="1">
    <original>A</original>
    <variation>G</variation>
    <location>
        <position position="362"/>
    </location>
</feature>
<feature type="sequence conflict" description="In Ref. 1; AAN71626." evidence="3" ref="1">
    <original>M</original>
    <variation>I</variation>
    <location>
        <position position="415"/>
    </location>
</feature>
<feature type="sequence conflict" description="In Ref. 1; AAN71626." evidence="3" ref="1">
    <original>Y</original>
    <variation>S</variation>
    <location>
        <position position="420"/>
    </location>
</feature>
<feature type="sequence conflict" description="In Ref. 1; AAN71626." evidence="3" ref="1">
    <original>VREEK</original>
    <variation>LREEE</variation>
    <location>
        <begin position="629"/>
        <end position="633"/>
    </location>
</feature>
<feature type="sequence conflict" description="In Ref. 1; AAN71626." evidence="3" ref="1">
    <original>E</original>
    <variation>G</variation>
    <location>
        <position position="686"/>
    </location>
</feature>
<feature type="sequence conflict" description="In Ref. 1; AAN71626." evidence="3" ref="1">
    <original>I</original>
    <variation>M</variation>
    <location>
        <position position="773"/>
    </location>
</feature>
<feature type="sequence conflict" description="In Ref. 1; AAN71626." evidence="3" ref="1">
    <original>A</original>
    <variation>V</variation>
    <location>
        <position position="859"/>
    </location>
</feature>
<feature type="sequence conflict" description="In Ref. 1; AAN71626." evidence="3" ref="1">
    <original>Y</original>
    <variation>D</variation>
    <location>
        <position position="869"/>
    </location>
</feature>
<name>PKND_CHLT2</name>
<gene>
    <name evidence="1" type="primary">pknD</name>
    <name type="ordered locus">CTL0553</name>
</gene>
<organism>
    <name type="scientific">Chlamydia trachomatis serovar L2 (strain ATCC VR-902B / DSM 19102 / 434/Bu)</name>
    <dbReference type="NCBI Taxonomy" id="471472"/>
    <lineage>
        <taxon>Bacteria</taxon>
        <taxon>Pseudomonadati</taxon>
        <taxon>Chlamydiota</taxon>
        <taxon>Chlamydiia</taxon>
        <taxon>Chlamydiales</taxon>
        <taxon>Chlamydiaceae</taxon>
        <taxon>Chlamydia/Chlamydophila group</taxon>
        <taxon>Chlamydia</taxon>
    </lineage>
</organism>
<evidence type="ECO:0000255" key="1">
    <source>
        <dbReference type="HAMAP-Rule" id="MF_01957"/>
    </source>
</evidence>
<evidence type="ECO:0000269" key="2">
    <source>
    </source>
</evidence>
<evidence type="ECO:0000305" key="3"/>
<evidence type="ECO:0000305" key="4">
    <source>
    </source>
</evidence>